<evidence type="ECO:0000255" key="1">
    <source>
        <dbReference type="HAMAP-Rule" id="MF_01206"/>
    </source>
</evidence>
<evidence type="ECO:0000305" key="2"/>
<keyword id="KW-0479">Metal-binding</keyword>
<keyword id="KW-0500">Molybdenum</keyword>
<keyword id="KW-0560">Oxidoreductase</keyword>
<keyword id="KW-0574">Periplasm</keyword>
<keyword id="KW-1185">Reference proteome</keyword>
<keyword id="KW-0732">Signal</keyword>
<gene>
    <name evidence="1" type="primary">msrP</name>
    <name type="ordered locus">PM0537</name>
</gene>
<reference key="1">
    <citation type="journal article" date="2001" name="Proc. Natl. Acad. Sci. U.S.A.">
        <title>Complete genomic sequence of Pasteurella multocida Pm70.</title>
        <authorList>
            <person name="May B.J."/>
            <person name="Zhang Q."/>
            <person name="Li L.L."/>
            <person name="Paustian M.L."/>
            <person name="Whittam T.S."/>
            <person name="Kapur V."/>
        </authorList>
    </citation>
    <scope>NUCLEOTIDE SEQUENCE [LARGE SCALE GENOMIC DNA]</scope>
    <source>
        <strain>Pm70</strain>
    </source>
</reference>
<sequence length="319" mass="36497">MHKLNENDVTPEHIFFERRKIIQSMGLMGAASLLPRFSLAAEKQDSRQALHFAKDHNPQNLLLTPENKVIGYNNFYEFGVDKASPAKYASALKTEPWTLRIEGEVEKPMTFDVHQLMQQLPLEERIYRFRCVEAWSMVIPWIGFELNKLLALVQPTSQAKYVEFETLYEPDSMPGQKNHFFGGGLIYPYVEGLTMAEAMHPLTLLSVGLYGKTLAPQNGAPIRLVVPWKYGFKNIKSIVKITLKSEQPMTTWHHAAPHEYGFYANVNPEVDHPRWSQASERVIGSGGLLSVKRQPTLLFNGYAEQVAHLYQDLDLRTYF</sequence>
<organism>
    <name type="scientific">Pasteurella multocida (strain Pm70)</name>
    <dbReference type="NCBI Taxonomy" id="272843"/>
    <lineage>
        <taxon>Bacteria</taxon>
        <taxon>Pseudomonadati</taxon>
        <taxon>Pseudomonadota</taxon>
        <taxon>Gammaproteobacteria</taxon>
        <taxon>Pasteurellales</taxon>
        <taxon>Pasteurellaceae</taxon>
        <taxon>Pasteurella</taxon>
    </lineage>
</organism>
<comment type="function">
    <text evidence="1">Part of the MsrPQ system that repairs oxidized periplasmic proteins containing methionine sulfoxide residues (Met-O), using respiratory chain electrons. Thus protects these proteins from oxidative-stress damage caused by reactive species of oxygen and chlorine generated by the host defense mechanisms. MsrPQ is essential for the maintenance of envelope integrity under bleach stress, rescuing a wide series of structurally unrelated periplasmic proteins from methionine oxidation. The catalytic subunit MsrP is non-stereospecific, being able to reduce both (R-) and (S-) diastereoisomers of methionine sulfoxide.</text>
</comment>
<comment type="catalytic activity">
    <reaction evidence="1">
        <text>L-methionyl-[protein] + a quinone + H2O = L-methionyl-(S)-S-oxide-[protein] + a quinol</text>
        <dbReference type="Rhea" id="RHEA:51292"/>
        <dbReference type="Rhea" id="RHEA-COMP:12313"/>
        <dbReference type="Rhea" id="RHEA-COMP:12315"/>
        <dbReference type="ChEBI" id="CHEBI:15377"/>
        <dbReference type="ChEBI" id="CHEBI:16044"/>
        <dbReference type="ChEBI" id="CHEBI:24646"/>
        <dbReference type="ChEBI" id="CHEBI:44120"/>
        <dbReference type="ChEBI" id="CHEBI:132124"/>
    </reaction>
</comment>
<comment type="catalytic activity">
    <reaction evidence="1">
        <text>L-methionyl-[protein] + a quinone + H2O = L-methionyl-(R)-S-oxide-[protein] + a quinol</text>
        <dbReference type="Rhea" id="RHEA:51296"/>
        <dbReference type="Rhea" id="RHEA-COMP:12313"/>
        <dbReference type="Rhea" id="RHEA-COMP:12314"/>
        <dbReference type="ChEBI" id="CHEBI:15377"/>
        <dbReference type="ChEBI" id="CHEBI:16044"/>
        <dbReference type="ChEBI" id="CHEBI:24646"/>
        <dbReference type="ChEBI" id="CHEBI:45764"/>
        <dbReference type="ChEBI" id="CHEBI:132124"/>
    </reaction>
</comment>
<comment type="cofactor">
    <cofactor evidence="1">
        <name>Mo-molybdopterin</name>
        <dbReference type="ChEBI" id="CHEBI:71302"/>
    </cofactor>
    <text evidence="1">Binds 1 Mo-molybdopterin (Mo-MPT) cofactor per subunit.</text>
</comment>
<comment type="subunit">
    <text evidence="1">Heterodimer of a catalytic subunit (MsrP) and a heme-binding subunit (MsrQ).</text>
</comment>
<comment type="subcellular location">
    <subcellularLocation>
        <location evidence="1">Periplasm</location>
    </subcellularLocation>
    <text evidence="1">Is attached to the inner membrane when interacting with the MsrQ subunit.</text>
</comment>
<comment type="PTM">
    <text evidence="1">Predicted to be exported by the Tat system. The position of the signal peptide cleavage has not been experimentally proven.</text>
</comment>
<comment type="similarity">
    <text evidence="1">Belongs to the MsrP family.</text>
</comment>
<comment type="sequence caution" evidence="2">
    <conflict type="erroneous initiation">
        <sequence resource="EMBL-CDS" id="AAK02621"/>
    </conflict>
</comment>
<feature type="signal peptide" description="Tat-type signal" evidence="1">
    <location>
        <begin position="1"/>
        <end position="40"/>
    </location>
</feature>
<feature type="chain" id="PRO_0000070690" description="Protein-methionine-sulfoxide reductase catalytic subunit MsrP" evidence="1">
    <location>
        <begin position="41"/>
        <end position="319"/>
    </location>
</feature>
<feature type="binding site" evidence="1">
    <location>
        <position position="73"/>
    </location>
    <ligand>
        <name>Mo-molybdopterin</name>
        <dbReference type="ChEBI" id="CHEBI:71302"/>
    </ligand>
</feature>
<feature type="binding site" evidence="1">
    <location>
        <begin position="76"/>
        <end position="77"/>
    </location>
    <ligand>
        <name>Mo-molybdopterin</name>
        <dbReference type="ChEBI" id="CHEBI:71302"/>
    </ligand>
</feature>
<feature type="binding site" evidence="1">
    <location>
        <position position="131"/>
    </location>
    <ligand>
        <name>Mo-molybdopterin</name>
        <dbReference type="ChEBI" id="CHEBI:71302"/>
    </ligand>
    <ligandPart>
        <name>Mo</name>
        <dbReference type="ChEBI" id="CHEBI:28685"/>
    </ligandPart>
</feature>
<feature type="binding site" evidence="1">
    <location>
        <position position="166"/>
    </location>
    <ligand>
        <name>Mo-molybdopterin</name>
        <dbReference type="ChEBI" id="CHEBI:71302"/>
    </ligand>
</feature>
<feature type="binding site" evidence="1">
    <location>
        <position position="218"/>
    </location>
    <ligand>
        <name>Mo-molybdopterin</name>
        <dbReference type="ChEBI" id="CHEBI:71302"/>
    </ligand>
</feature>
<feature type="binding site" evidence="1">
    <location>
        <position position="223"/>
    </location>
    <ligand>
        <name>Mo-molybdopterin</name>
        <dbReference type="ChEBI" id="CHEBI:71302"/>
    </ligand>
</feature>
<feature type="binding site" evidence="1">
    <location>
        <begin position="234"/>
        <end position="236"/>
    </location>
    <ligand>
        <name>Mo-molybdopterin</name>
        <dbReference type="ChEBI" id="CHEBI:71302"/>
    </ligand>
</feature>
<proteinExistence type="inferred from homology"/>
<accession>Q9CN98</accession>
<dbReference type="EC" id="1.8.5.-" evidence="1"/>
<dbReference type="EMBL" id="AE004439">
    <property type="protein sequence ID" value="AAK02621.1"/>
    <property type="status" value="ALT_INIT"/>
    <property type="molecule type" value="Genomic_DNA"/>
</dbReference>
<dbReference type="RefSeq" id="WP_016533561.1">
    <property type="nucleotide sequence ID" value="NC_002663.1"/>
</dbReference>
<dbReference type="SMR" id="Q9CN98"/>
<dbReference type="STRING" id="272843.PM0537"/>
<dbReference type="EnsemblBacteria" id="AAK02621">
    <property type="protein sequence ID" value="AAK02621"/>
    <property type="gene ID" value="PM0537"/>
</dbReference>
<dbReference type="KEGG" id="pmu:PM0537"/>
<dbReference type="PATRIC" id="fig|272843.6.peg.544"/>
<dbReference type="HOGENOM" id="CLU_045520_0_0_6"/>
<dbReference type="OrthoDB" id="9795587at2"/>
<dbReference type="Proteomes" id="UP000000809">
    <property type="component" value="Chromosome"/>
</dbReference>
<dbReference type="GO" id="GO:0042597">
    <property type="term" value="C:periplasmic space"/>
    <property type="evidence" value="ECO:0007669"/>
    <property type="project" value="UniProtKB-SubCell"/>
</dbReference>
<dbReference type="GO" id="GO:0046872">
    <property type="term" value="F:metal ion binding"/>
    <property type="evidence" value="ECO:0007669"/>
    <property type="project" value="UniProtKB-KW"/>
</dbReference>
<dbReference type="GO" id="GO:0043546">
    <property type="term" value="F:molybdopterin cofactor binding"/>
    <property type="evidence" value="ECO:0007669"/>
    <property type="project" value="UniProtKB-UniRule"/>
</dbReference>
<dbReference type="GO" id="GO:0016672">
    <property type="term" value="F:oxidoreductase activity, acting on a sulfur group of donors, quinone or similar compound as acceptor"/>
    <property type="evidence" value="ECO:0007669"/>
    <property type="project" value="UniProtKB-UniRule"/>
</dbReference>
<dbReference type="GO" id="GO:0030091">
    <property type="term" value="P:protein repair"/>
    <property type="evidence" value="ECO:0007669"/>
    <property type="project" value="UniProtKB-UniRule"/>
</dbReference>
<dbReference type="Gene3D" id="3.90.420.10">
    <property type="entry name" value="Oxidoreductase, molybdopterin-binding domain"/>
    <property type="match status" value="1"/>
</dbReference>
<dbReference type="HAMAP" id="MF_01206">
    <property type="entry name" value="MsrP"/>
    <property type="match status" value="1"/>
</dbReference>
<dbReference type="InterPro" id="IPR022867">
    <property type="entry name" value="MsrP"/>
</dbReference>
<dbReference type="InterPro" id="IPR000572">
    <property type="entry name" value="OxRdtase_Mopterin-bd_dom"/>
</dbReference>
<dbReference type="InterPro" id="IPR036374">
    <property type="entry name" value="OxRdtase_Mopterin-bd_sf"/>
</dbReference>
<dbReference type="NCBIfam" id="NF003767">
    <property type="entry name" value="PRK05363.1"/>
    <property type="match status" value="1"/>
</dbReference>
<dbReference type="PANTHER" id="PTHR43032">
    <property type="entry name" value="PROTEIN-METHIONINE-SULFOXIDE REDUCTASE"/>
    <property type="match status" value="1"/>
</dbReference>
<dbReference type="PANTHER" id="PTHR43032:SF3">
    <property type="entry name" value="PROTEIN-METHIONINE-SULFOXIDE REDUCTASE CATALYTIC SUBUNIT MSRP"/>
    <property type="match status" value="1"/>
</dbReference>
<dbReference type="Pfam" id="PF00174">
    <property type="entry name" value="Oxidored_molyb"/>
    <property type="match status" value="1"/>
</dbReference>
<dbReference type="SUPFAM" id="SSF56524">
    <property type="entry name" value="Oxidoreductase molybdopterin-binding domain"/>
    <property type="match status" value="1"/>
</dbReference>
<name>MSRP_PASMU</name>
<protein>
    <recommendedName>
        <fullName evidence="1">Protein-methionine-sulfoxide reductase catalytic subunit MsrP</fullName>
        <ecNumber evidence="1">1.8.5.-</ecNumber>
    </recommendedName>
</protein>